<protein>
    <recommendedName>
        <fullName evidence="1">Maltose/maltodextrin transport system permease protein MalF</fullName>
    </recommendedName>
</protein>
<comment type="function">
    <text evidence="1">Part of the ABC transporter complex MalEFGK involved in maltose/maltodextrin import. Probably responsible for the translocation of the substrate across the membrane.</text>
</comment>
<comment type="subunit">
    <text evidence="1">The complex is composed of two ATP-binding proteins (MalK), two transmembrane proteins (MalG and MalF) and a solute-binding protein (MalE).</text>
</comment>
<comment type="subcellular location">
    <subcellularLocation>
        <location evidence="1">Cell inner membrane</location>
        <topology evidence="1">Multi-pass membrane protein</topology>
    </subcellularLocation>
</comment>
<comment type="similarity">
    <text evidence="4">Belongs to the binding-protein-dependent transport system permease family. MalFG subfamily.</text>
</comment>
<reference key="1">
    <citation type="journal article" date="1992" name="Biochim. Biophys. Acta">
        <title>Completion of the nucleotide sequence of the 'maltose B' region in Salmonella typhimurium: the high conservation of the malM gene suggests a selected physiological role for its product.</title>
        <authorList>
            <person name="Schneider E."/>
            <person name="Francoz E."/>
            <person name="Dassa E."/>
        </authorList>
    </citation>
    <scope>NUCLEOTIDE SEQUENCE [GENOMIC DNA]</scope>
    <source>
        <strain>LT2</strain>
    </source>
</reference>
<reference key="2">
    <citation type="journal article" date="2001" name="Nature">
        <title>Complete genome sequence of Salmonella enterica serovar Typhimurium LT2.</title>
        <authorList>
            <person name="McClelland M."/>
            <person name="Sanderson K.E."/>
            <person name="Spieth J."/>
            <person name="Clifton S.W."/>
            <person name="Latreille P."/>
            <person name="Courtney L."/>
            <person name="Porwollik S."/>
            <person name="Ali J."/>
            <person name="Dante M."/>
            <person name="Du F."/>
            <person name="Hou S."/>
            <person name="Layman D."/>
            <person name="Leonard S."/>
            <person name="Nguyen C."/>
            <person name="Scott K."/>
            <person name="Holmes A."/>
            <person name="Grewal N."/>
            <person name="Mulvaney E."/>
            <person name="Ryan E."/>
            <person name="Sun H."/>
            <person name="Florea L."/>
            <person name="Miller W."/>
            <person name="Stoneking T."/>
            <person name="Nhan M."/>
            <person name="Waterston R."/>
            <person name="Wilson R.K."/>
        </authorList>
    </citation>
    <scope>NUCLEOTIDE SEQUENCE [LARGE SCALE GENOMIC DNA]</scope>
    <source>
        <strain>LT2 / SGSC1412 / ATCC 700720</strain>
    </source>
</reference>
<evidence type="ECO:0000250" key="1">
    <source>
        <dbReference type="UniProtKB" id="P02916"/>
    </source>
</evidence>
<evidence type="ECO:0000255" key="2"/>
<evidence type="ECO:0000255" key="3">
    <source>
        <dbReference type="PROSITE-ProRule" id="PRU00441"/>
    </source>
</evidence>
<evidence type="ECO:0000305" key="4"/>
<proteinExistence type="inferred from homology"/>
<organism>
    <name type="scientific">Salmonella typhimurium (strain LT2 / SGSC1412 / ATCC 700720)</name>
    <dbReference type="NCBI Taxonomy" id="99287"/>
    <lineage>
        <taxon>Bacteria</taxon>
        <taxon>Pseudomonadati</taxon>
        <taxon>Pseudomonadota</taxon>
        <taxon>Gammaproteobacteria</taxon>
        <taxon>Enterobacterales</taxon>
        <taxon>Enterobacteriaceae</taxon>
        <taxon>Salmonella</taxon>
    </lineage>
</organism>
<accession>P26467</accession>
<gene>
    <name type="primary">malF</name>
    <name type="ordered locus">STM4228</name>
</gene>
<dbReference type="EMBL" id="X54292">
    <property type="protein sequence ID" value="CAA38190.1"/>
    <property type="molecule type" value="Genomic_DNA"/>
</dbReference>
<dbReference type="EMBL" id="M33921">
    <property type="protein sequence ID" value="AAA27159.1"/>
    <property type="molecule type" value="Genomic_DNA"/>
</dbReference>
<dbReference type="EMBL" id="AE006468">
    <property type="protein sequence ID" value="AAL23052.1"/>
    <property type="molecule type" value="Genomic_DNA"/>
</dbReference>
<dbReference type="PIR" id="S20604">
    <property type="entry name" value="S20604"/>
</dbReference>
<dbReference type="RefSeq" id="NP_463093.1">
    <property type="nucleotide sequence ID" value="NC_003197.2"/>
</dbReference>
<dbReference type="RefSeq" id="WP_000382573.1">
    <property type="nucleotide sequence ID" value="NC_003197.2"/>
</dbReference>
<dbReference type="SMR" id="P26467"/>
<dbReference type="STRING" id="99287.STM4228"/>
<dbReference type="PaxDb" id="99287-STM4228"/>
<dbReference type="GeneID" id="1255754"/>
<dbReference type="KEGG" id="stm:STM4228"/>
<dbReference type="PATRIC" id="fig|99287.12.peg.4448"/>
<dbReference type="HOGENOM" id="CLU_016047_20_0_6"/>
<dbReference type="OMA" id="IITQNRQ"/>
<dbReference type="PhylomeDB" id="P26467"/>
<dbReference type="BioCyc" id="SENT99287:STM4228-MONOMER"/>
<dbReference type="Proteomes" id="UP000001014">
    <property type="component" value="Chromosome"/>
</dbReference>
<dbReference type="GO" id="GO:1990060">
    <property type="term" value="C:maltose transport complex"/>
    <property type="evidence" value="ECO:0000318"/>
    <property type="project" value="GO_Central"/>
</dbReference>
<dbReference type="GO" id="GO:0015423">
    <property type="term" value="F:ABC-type maltose transporter activity"/>
    <property type="evidence" value="ECO:0000318"/>
    <property type="project" value="GO_Central"/>
</dbReference>
<dbReference type="GO" id="GO:0042956">
    <property type="term" value="P:maltodextrin transmembrane transport"/>
    <property type="evidence" value="ECO:0000318"/>
    <property type="project" value="GO_Central"/>
</dbReference>
<dbReference type="CDD" id="cd06261">
    <property type="entry name" value="TM_PBP2"/>
    <property type="match status" value="1"/>
</dbReference>
<dbReference type="FunFam" id="1.10.3720.10:FF:000030">
    <property type="entry name" value="Maltose ABC transporter permease MalF"/>
    <property type="match status" value="1"/>
</dbReference>
<dbReference type="FunFam" id="1.20.58.370:FF:000001">
    <property type="entry name" value="Maltose ABC transporter permease MalF"/>
    <property type="match status" value="1"/>
</dbReference>
<dbReference type="FunFam" id="2.40.430.10:FF:000001">
    <property type="entry name" value="Maltose ABC transporter permease MalF"/>
    <property type="match status" value="1"/>
</dbReference>
<dbReference type="Gene3D" id="2.40.430.10">
    <property type="entry name" value="D-maltodextrin-binding protein, MBP"/>
    <property type="match status" value="1"/>
</dbReference>
<dbReference type="Gene3D" id="1.20.58.370">
    <property type="entry name" value="MalF N-terminal region-like"/>
    <property type="match status" value="1"/>
</dbReference>
<dbReference type="Gene3D" id="3.10.650.10">
    <property type="entry name" value="MalF N-terminal region-like"/>
    <property type="match status" value="1"/>
</dbReference>
<dbReference type="Gene3D" id="1.10.3720.10">
    <property type="entry name" value="MetI-like"/>
    <property type="match status" value="1"/>
</dbReference>
<dbReference type="InterPro" id="IPR035277">
    <property type="entry name" value="MalF_N"/>
</dbReference>
<dbReference type="InterPro" id="IPR048464">
    <property type="entry name" value="MalF_N_TM"/>
</dbReference>
<dbReference type="InterPro" id="IPR029345">
    <property type="entry name" value="MalF_P2"/>
</dbReference>
<dbReference type="InterPro" id="IPR047103">
    <property type="entry name" value="MalF_P2_sf"/>
</dbReference>
<dbReference type="InterPro" id="IPR000515">
    <property type="entry name" value="MetI-like"/>
</dbReference>
<dbReference type="InterPro" id="IPR035906">
    <property type="entry name" value="MetI-like_sf"/>
</dbReference>
<dbReference type="NCBIfam" id="NF008232">
    <property type="entry name" value="PRK10999.1"/>
    <property type="match status" value="1"/>
</dbReference>
<dbReference type="PANTHER" id="PTHR47314">
    <property type="entry name" value="MALTOSE/MALTODEXTRIN TRANSPORT SYSTEM PERMEASE PROTEIN MALF"/>
    <property type="match status" value="1"/>
</dbReference>
<dbReference type="PANTHER" id="PTHR47314:SF1">
    <property type="entry name" value="MALTOSE_MALTODEXTRIN TRANSPORT SYSTEM PERMEASE PROTEIN MALF"/>
    <property type="match status" value="1"/>
</dbReference>
<dbReference type="Pfam" id="PF00528">
    <property type="entry name" value="BPD_transp_1"/>
    <property type="match status" value="1"/>
</dbReference>
<dbReference type="Pfam" id="PF20872">
    <property type="entry name" value="MalF_N_TM"/>
    <property type="match status" value="1"/>
</dbReference>
<dbReference type="Pfam" id="PF14785">
    <property type="entry name" value="MalF_P2"/>
    <property type="match status" value="1"/>
</dbReference>
<dbReference type="SUPFAM" id="SSF160964">
    <property type="entry name" value="MalF N-terminal region-like"/>
    <property type="match status" value="1"/>
</dbReference>
<dbReference type="SUPFAM" id="SSF161098">
    <property type="entry name" value="MetI-like"/>
    <property type="match status" value="1"/>
</dbReference>
<dbReference type="PROSITE" id="PS50928">
    <property type="entry name" value="ABC_TM1"/>
    <property type="match status" value="1"/>
</dbReference>
<keyword id="KW-0997">Cell inner membrane</keyword>
<keyword id="KW-1003">Cell membrane</keyword>
<keyword id="KW-0472">Membrane</keyword>
<keyword id="KW-1185">Reference proteome</keyword>
<keyword id="KW-0762">Sugar transport</keyword>
<keyword id="KW-0812">Transmembrane</keyword>
<keyword id="KW-1133">Transmembrane helix</keyword>
<keyword id="KW-0813">Transport</keyword>
<name>MALF_SALTY</name>
<sequence>MDVIKKKHWWQSDQLKWSVIGLLGLLVGYLVVLMYVQGEYLFAIMTLILSSAGLYIFANRKTYAWRYVYPGLAGMGLFVLFPLVCTIAIAFTNYSSTNQLTFERAQQVLMDRSYQAGKTYNFGLYPTGDEWQLALTDGETGKHYLSDAFSFGGEQKLQLKETDALPGGERANLRIITQNRLALNQITAVLPDESKVIMSSLRQFSGTRPLYTLADDGLLTNNQSGVKYRPNNDSGYYQSINADGSWGDEKLSPGYTVTIGAKNFTRVFTDEGIQKPFFAIFVWTVVFSVLTVVLTVAVGMVLACLVQWEALKGKAIYRVLLILPYAVPSFISILIFKGLFNQSFGEINMMLSALFGIKPAWFSDPNTARAMVIIVNTWLGYPYMMILCMGLLKAIPDDLYEASAMDGAGPFQNFFKITLPLLIKPLTPLMIASFAFNFNNFVLIQLLTNGGPDRLGTTTPAGYTDLLVSYTYRIAFEGGGGQDFGLAAAIATLIFLLVGALAIVNLKATRMKFD</sequence>
<feature type="chain" id="PRO_0000060074" description="Maltose/maltodextrin transport system permease protein MalF">
    <location>
        <begin position="1"/>
        <end position="514"/>
    </location>
</feature>
<feature type="topological domain" description="Cytoplasmic" evidence="2">
    <location>
        <begin position="1"/>
        <end position="16"/>
    </location>
</feature>
<feature type="transmembrane region" description="Helical" evidence="3">
    <location>
        <begin position="17"/>
        <end position="36"/>
    </location>
</feature>
<feature type="topological domain" description="Periplasmic" evidence="2">
    <location>
        <begin position="37"/>
        <end position="39"/>
    </location>
</feature>
<feature type="transmembrane region" description="Helical" evidence="3">
    <location>
        <begin position="40"/>
        <end position="57"/>
    </location>
</feature>
<feature type="topological domain" description="Cytoplasmic" evidence="2">
    <location>
        <begin position="58"/>
        <end position="69"/>
    </location>
</feature>
<feature type="transmembrane region" description="Helical" evidence="3">
    <location>
        <begin position="70"/>
        <end position="92"/>
    </location>
</feature>
<feature type="topological domain" description="Periplasmic" evidence="2">
    <location>
        <begin position="93"/>
        <end position="283"/>
    </location>
</feature>
<feature type="transmembrane region" description="Helical" evidence="3">
    <location>
        <begin position="284"/>
        <end position="306"/>
    </location>
</feature>
<feature type="topological domain" description="Cytoplasmic" evidence="2">
    <location>
        <begin position="307"/>
        <end position="318"/>
    </location>
</feature>
<feature type="transmembrane region" description="Helical" evidence="3">
    <location>
        <begin position="319"/>
        <end position="341"/>
    </location>
</feature>
<feature type="topological domain" description="Periplasmic" evidence="2">
    <location>
        <begin position="342"/>
        <end position="369"/>
    </location>
</feature>
<feature type="transmembrane region" description="Helical" evidence="3">
    <location>
        <begin position="370"/>
        <end position="392"/>
    </location>
</feature>
<feature type="topological domain" description="Cytoplasmic" evidence="2">
    <location>
        <begin position="393"/>
        <end position="412"/>
    </location>
</feature>
<feature type="transmembrane region" description="Helical" evidence="3">
    <location>
        <begin position="413"/>
        <end position="435"/>
    </location>
</feature>
<feature type="topological domain" description="Periplasmic" evidence="2">
    <location>
        <begin position="436"/>
        <end position="483"/>
    </location>
</feature>
<feature type="transmembrane region" description="Helical" evidence="3">
    <location>
        <begin position="484"/>
        <end position="506"/>
    </location>
</feature>
<feature type="topological domain" description="Cytoplasmic" evidence="2">
    <location>
        <begin position="507"/>
        <end position="514"/>
    </location>
</feature>
<feature type="domain" description="ABC transmembrane type-1" evidence="3">
    <location>
        <begin position="281"/>
        <end position="505"/>
    </location>
</feature>
<feature type="sequence conflict" description="In Ref. 1; CAA38190." evidence="4" ref="1">
    <original>A</original>
    <variation>G</variation>
    <location>
        <position position="242"/>
    </location>
</feature>
<feature type="sequence conflict" description="In Ref. 1; CAA38190." evidence="4" ref="1">
    <original>I</original>
    <variation>S</variation>
    <location>
        <position position="273"/>
    </location>
</feature>